<comment type="function">
    <text evidence="3">Component of the cytochrome c oxidase, the last enzyme in the mitochondrial electron transport chain which drives oxidative phosphorylation. The respiratory chain contains 3 multisubunit complexes succinate dehydrogenase (complex II, CII), ubiquinol-cytochrome c oxidoreductase (cytochrome b-c1 complex, complex III, CIII) and cytochrome c oxidase (complex IV, CIV), that cooperate to transfer electrons derived from NADH and succinate to molecular oxygen, creating an electrochemical gradient over the inner membrane that drives transmembrane transport and the ATP synthase. Cytochrome c oxidase is the component of the respiratory chain that catalyzes the reduction of oxygen to water. Electrons originating from reduced cytochrome c in the intermembrane space (IMS) are transferred via the dinuclear copper A center (CU(A)) of subunit 2 and heme A of subunit 1 to the active site in subunit 1, a binuclear center (BNC) formed by heme A3 and copper B (CU(B)). The BNC reduces molecular oxygen to 2 water molecules using 4 electrons from cytochrome c in the IMS and 4 protons from the mitochondrial matrix.</text>
</comment>
<comment type="catalytic activity">
    <reaction evidence="3">
        <text>4 Fe(II)-[cytochrome c] + O2 + 8 H(+)(in) = 4 Fe(III)-[cytochrome c] + 2 H2O + 4 H(+)(out)</text>
        <dbReference type="Rhea" id="RHEA:11436"/>
        <dbReference type="Rhea" id="RHEA-COMP:10350"/>
        <dbReference type="Rhea" id="RHEA-COMP:14399"/>
        <dbReference type="ChEBI" id="CHEBI:15377"/>
        <dbReference type="ChEBI" id="CHEBI:15378"/>
        <dbReference type="ChEBI" id="CHEBI:15379"/>
        <dbReference type="ChEBI" id="CHEBI:29033"/>
        <dbReference type="ChEBI" id="CHEBI:29034"/>
        <dbReference type="EC" id="7.1.1.9"/>
    </reaction>
    <physiologicalReaction direction="left-to-right" evidence="3">
        <dbReference type="Rhea" id="RHEA:11437"/>
    </physiologicalReaction>
</comment>
<comment type="cofactor">
    <cofactor evidence="4">
        <name>Cu cation</name>
        <dbReference type="ChEBI" id="CHEBI:23378"/>
    </cofactor>
    <text evidence="4">Binds a dinuclear copper A center per subunit.</text>
</comment>
<comment type="subunit">
    <text evidence="1 4">Component of the cytochrome c oxidase (complex IV, CIV), a multisubunit enzyme composed of 14 subunits. The complex is composed of a catalytic core of 3 subunits MT-CO1, MT-CO2 and MT-CO3, encoded in the mitochondrial DNA, and 11 supernumerary subunits COX4I, COX5A, COX5B, COX6A, COX6B, COX6C, COX7A, COX7B, COX7C, COX8 and NDUFA4, which are encoded in the nuclear genome. The complex exists as a monomer or a dimer and forms supercomplexes (SCs) in the inner mitochondrial membrane with NADH-ubiquinone oxidoreductase (complex I, CI) and ubiquinol-cytochrome c oxidoreductase (cytochrome b-c1 complex, complex III, CIII), resulting in different assemblies (supercomplex SCI(1)III(2)IV(1) and megacomplex MCI(2)III(2)IV(2)) (By similarity). Found in a complex with TMEM177, COA6, COX18, COX20, SCO1 and SCO2. Interacts with TMEM177 in a COX20-dependent manner. Interacts with COX20. Interacts with COX16 (By similarity).</text>
</comment>
<comment type="subcellular location">
    <subcellularLocation>
        <location evidence="4">Mitochondrion inner membrane</location>
        <topology evidence="4">Multi-pass membrane protein</topology>
    </subcellularLocation>
</comment>
<comment type="similarity">
    <text evidence="5">Belongs to the cytochrome c oxidase subunit 2 family.</text>
</comment>
<organism>
    <name type="scientific">Maxomys surifer</name>
    <name type="common">Indomalayan maxomys</name>
    <name type="synonym">Red spiny rat</name>
    <dbReference type="NCBI Taxonomy" id="69081"/>
    <lineage>
        <taxon>Eukaryota</taxon>
        <taxon>Metazoa</taxon>
        <taxon>Chordata</taxon>
        <taxon>Craniata</taxon>
        <taxon>Vertebrata</taxon>
        <taxon>Euteleostomi</taxon>
        <taxon>Mammalia</taxon>
        <taxon>Eutheria</taxon>
        <taxon>Euarchontoglires</taxon>
        <taxon>Glires</taxon>
        <taxon>Rodentia</taxon>
        <taxon>Myomorpha</taxon>
        <taxon>Muroidea</taxon>
        <taxon>Muridae</taxon>
        <taxon>Murinae</taxon>
        <taxon>Maxomys</taxon>
    </lineage>
</organism>
<proteinExistence type="inferred from homology"/>
<name>COX2_MAXSU</name>
<protein>
    <recommendedName>
        <fullName>Cytochrome c oxidase subunit 2</fullName>
        <ecNumber>7.1.1.9</ecNumber>
    </recommendedName>
    <alternativeName>
        <fullName>Cytochrome c oxidase polypeptide II</fullName>
    </alternativeName>
</protein>
<reference key="1">
    <citation type="journal article" date="2005" name="Mol. Phylogenet. Evol.">
        <title>Multigene phylogeny of the Old World mice, Murinae, reveals distinct geographic lineages and the declining utility of mitochondrial genes compared to nuclear genes.</title>
        <authorList>
            <person name="Steppan S.J."/>
            <person name="Adkins R.M."/>
            <person name="Spinks P.Q."/>
            <person name="Hale C."/>
        </authorList>
    </citation>
    <scope>NUCLEOTIDE SEQUENCE [GENOMIC DNA]</scope>
</reference>
<keyword id="KW-0186">Copper</keyword>
<keyword id="KW-0249">Electron transport</keyword>
<keyword id="KW-0460">Magnesium</keyword>
<keyword id="KW-0472">Membrane</keyword>
<keyword id="KW-0479">Metal-binding</keyword>
<keyword id="KW-0496">Mitochondrion</keyword>
<keyword id="KW-0999">Mitochondrion inner membrane</keyword>
<keyword id="KW-0597">Phosphoprotein</keyword>
<keyword id="KW-0679">Respiratory chain</keyword>
<keyword id="KW-1278">Translocase</keyword>
<keyword id="KW-0812">Transmembrane</keyword>
<keyword id="KW-1133">Transmembrane helix</keyword>
<keyword id="KW-0813">Transport</keyword>
<gene>
    <name type="primary">MT-CO2</name>
    <name type="synonym">COII</name>
    <name type="synonym">COX2</name>
    <name type="synonym">COXII</name>
    <name type="synonym">MTCO2</name>
</gene>
<feature type="chain" id="PRO_0000254932" description="Cytochrome c oxidase subunit 2">
    <location>
        <begin position="1"/>
        <end position="227"/>
    </location>
</feature>
<feature type="topological domain" description="Mitochondrial intermembrane" evidence="4">
    <location>
        <begin position="1"/>
        <end position="14"/>
    </location>
</feature>
<feature type="transmembrane region" description="Helical; Name=I" evidence="4">
    <location>
        <begin position="15"/>
        <end position="45"/>
    </location>
</feature>
<feature type="topological domain" description="Mitochondrial matrix" evidence="4">
    <location>
        <begin position="46"/>
        <end position="59"/>
    </location>
</feature>
<feature type="transmembrane region" description="Helical; Name=II" evidence="4">
    <location>
        <begin position="60"/>
        <end position="87"/>
    </location>
</feature>
<feature type="topological domain" description="Mitochondrial intermembrane" evidence="4">
    <location>
        <begin position="88"/>
        <end position="227"/>
    </location>
</feature>
<feature type="binding site" evidence="4">
    <location>
        <position position="161"/>
    </location>
    <ligand>
        <name>Cu cation</name>
        <dbReference type="ChEBI" id="CHEBI:23378"/>
        <label>A1</label>
    </ligand>
</feature>
<feature type="binding site" evidence="4">
    <location>
        <position position="196"/>
    </location>
    <ligand>
        <name>Cu cation</name>
        <dbReference type="ChEBI" id="CHEBI:23378"/>
        <label>A1</label>
    </ligand>
</feature>
<feature type="binding site" evidence="4">
    <location>
        <position position="196"/>
    </location>
    <ligand>
        <name>Cu cation</name>
        <dbReference type="ChEBI" id="CHEBI:23378"/>
        <label>A2</label>
    </ligand>
</feature>
<feature type="binding site" evidence="4">
    <location>
        <position position="198"/>
    </location>
    <ligand>
        <name>Cu cation</name>
        <dbReference type="ChEBI" id="CHEBI:23378"/>
        <label>A2</label>
    </ligand>
</feature>
<feature type="binding site" evidence="4">
    <location>
        <position position="198"/>
    </location>
    <ligand>
        <name>Mg(2+)</name>
        <dbReference type="ChEBI" id="CHEBI:18420"/>
        <note>ligand shared with MT-CO1</note>
    </ligand>
</feature>
<feature type="binding site" evidence="4">
    <location>
        <position position="200"/>
    </location>
    <ligand>
        <name>Cu cation</name>
        <dbReference type="ChEBI" id="CHEBI:23378"/>
        <label>A1</label>
    </ligand>
</feature>
<feature type="binding site" evidence="4">
    <location>
        <position position="200"/>
    </location>
    <ligand>
        <name>Cu cation</name>
        <dbReference type="ChEBI" id="CHEBI:23378"/>
        <label>A2</label>
    </ligand>
</feature>
<feature type="binding site" evidence="4">
    <location>
        <position position="204"/>
    </location>
    <ligand>
        <name>Cu cation</name>
        <dbReference type="ChEBI" id="CHEBI:23378"/>
        <label>A2</label>
    </ligand>
</feature>
<feature type="binding site" evidence="4">
    <location>
        <position position="207"/>
    </location>
    <ligand>
        <name>Cu cation</name>
        <dbReference type="ChEBI" id="CHEBI:23378"/>
        <label>A1</label>
    </ligand>
</feature>
<feature type="modified residue" description="Phosphotyrosine" evidence="2">
    <location>
        <position position="218"/>
    </location>
</feature>
<evidence type="ECO:0000250" key="1">
    <source>
        <dbReference type="UniProtKB" id="P00403"/>
    </source>
</evidence>
<evidence type="ECO:0000250" key="2">
    <source>
        <dbReference type="UniProtKB" id="P00406"/>
    </source>
</evidence>
<evidence type="ECO:0000250" key="3">
    <source>
        <dbReference type="UniProtKB" id="P00410"/>
    </source>
</evidence>
<evidence type="ECO:0000250" key="4">
    <source>
        <dbReference type="UniProtKB" id="P68530"/>
    </source>
</evidence>
<evidence type="ECO:0000305" key="5"/>
<sequence length="227" mass="25944">MAYPFQLGLQDATSPIMEELMNFHDHTLMIVFLISTLVLYIISLMLTTKLTHTSTMDAQEVETIWTILPAVILILIALPSLRILYMMDEINNPALTVKTMGHQWYWSYEYTDYEDLCFDSYMIPTNDLKPGELRLLEVDNRVVLPMELPIRMLISSEDVLHSWAVPSLGLKTDAIPGRLNQATVTSNRPGLFYGQCSEICGSNHSFMPIVLEMVPLKYFENWSASMI</sequence>
<accession>Q38RY9</accession>
<dbReference type="EC" id="7.1.1.9"/>
<dbReference type="EMBL" id="DQ019107">
    <property type="protein sequence ID" value="ABA28411.1"/>
    <property type="molecule type" value="Genomic_DNA"/>
</dbReference>
<dbReference type="SMR" id="Q38RY9"/>
<dbReference type="GO" id="GO:0005743">
    <property type="term" value="C:mitochondrial inner membrane"/>
    <property type="evidence" value="ECO:0007669"/>
    <property type="project" value="UniProtKB-SubCell"/>
</dbReference>
<dbReference type="GO" id="GO:0045277">
    <property type="term" value="C:respiratory chain complex IV"/>
    <property type="evidence" value="ECO:0000250"/>
    <property type="project" value="UniProtKB"/>
</dbReference>
<dbReference type="GO" id="GO:0005507">
    <property type="term" value="F:copper ion binding"/>
    <property type="evidence" value="ECO:0007669"/>
    <property type="project" value="InterPro"/>
</dbReference>
<dbReference type="GO" id="GO:0004129">
    <property type="term" value="F:cytochrome-c oxidase activity"/>
    <property type="evidence" value="ECO:0007669"/>
    <property type="project" value="UniProtKB-EC"/>
</dbReference>
<dbReference type="GO" id="GO:0042773">
    <property type="term" value="P:ATP synthesis coupled electron transport"/>
    <property type="evidence" value="ECO:0007669"/>
    <property type="project" value="TreeGrafter"/>
</dbReference>
<dbReference type="CDD" id="cd13912">
    <property type="entry name" value="CcO_II_C"/>
    <property type="match status" value="1"/>
</dbReference>
<dbReference type="FunFam" id="1.10.287.90:FF:000001">
    <property type="entry name" value="Cytochrome c oxidase subunit 2"/>
    <property type="match status" value="1"/>
</dbReference>
<dbReference type="FunFam" id="2.60.40.420:FF:000001">
    <property type="entry name" value="Cytochrome c oxidase subunit 2"/>
    <property type="match status" value="1"/>
</dbReference>
<dbReference type="Gene3D" id="1.10.287.90">
    <property type="match status" value="1"/>
</dbReference>
<dbReference type="Gene3D" id="2.60.40.420">
    <property type="entry name" value="Cupredoxins - blue copper proteins"/>
    <property type="match status" value="1"/>
</dbReference>
<dbReference type="InterPro" id="IPR045187">
    <property type="entry name" value="CcO_II"/>
</dbReference>
<dbReference type="InterPro" id="IPR002429">
    <property type="entry name" value="CcO_II-like_C"/>
</dbReference>
<dbReference type="InterPro" id="IPR034210">
    <property type="entry name" value="CcO_II_C"/>
</dbReference>
<dbReference type="InterPro" id="IPR001505">
    <property type="entry name" value="Copper_CuA"/>
</dbReference>
<dbReference type="InterPro" id="IPR008972">
    <property type="entry name" value="Cupredoxin"/>
</dbReference>
<dbReference type="InterPro" id="IPR014222">
    <property type="entry name" value="Cyt_c_oxidase_su2"/>
</dbReference>
<dbReference type="InterPro" id="IPR011759">
    <property type="entry name" value="Cyt_c_oxidase_su2_TM_dom"/>
</dbReference>
<dbReference type="InterPro" id="IPR036257">
    <property type="entry name" value="Cyt_c_oxidase_su2_TM_sf"/>
</dbReference>
<dbReference type="NCBIfam" id="TIGR02866">
    <property type="entry name" value="CoxB"/>
    <property type="match status" value="1"/>
</dbReference>
<dbReference type="PANTHER" id="PTHR22888:SF9">
    <property type="entry name" value="CYTOCHROME C OXIDASE SUBUNIT 2"/>
    <property type="match status" value="1"/>
</dbReference>
<dbReference type="PANTHER" id="PTHR22888">
    <property type="entry name" value="CYTOCHROME C OXIDASE, SUBUNIT II"/>
    <property type="match status" value="1"/>
</dbReference>
<dbReference type="Pfam" id="PF00116">
    <property type="entry name" value="COX2"/>
    <property type="match status" value="1"/>
</dbReference>
<dbReference type="Pfam" id="PF02790">
    <property type="entry name" value="COX2_TM"/>
    <property type="match status" value="1"/>
</dbReference>
<dbReference type="PRINTS" id="PR01166">
    <property type="entry name" value="CYCOXIDASEII"/>
</dbReference>
<dbReference type="SUPFAM" id="SSF49503">
    <property type="entry name" value="Cupredoxins"/>
    <property type="match status" value="1"/>
</dbReference>
<dbReference type="SUPFAM" id="SSF81464">
    <property type="entry name" value="Cytochrome c oxidase subunit II-like, transmembrane region"/>
    <property type="match status" value="1"/>
</dbReference>
<dbReference type="PROSITE" id="PS00078">
    <property type="entry name" value="COX2"/>
    <property type="match status" value="1"/>
</dbReference>
<dbReference type="PROSITE" id="PS50857">
    <property type="entry name" value="COX2_CUA"/>
    <property type="match status" value="1"/>
</dbReference>
<dbReference type="PROSITE" id="PS50999">
    <property type="entry name" value="COX2_TM"/>
    <property type="match status" value="1"/>
</dbReference>
<geneLocation type="mitochondrion"/>